<gene>
    <name evidence="1 24" type="primary">ftsI</name>
    <name type="synonym">pbpB</name>
    <name type="ordered locus">b0084</name>
    <name type="ordered locus">JW0082</name>
</gene>
<feature type="chain" id="PRO_0000017052" description="Peptidoglycan D,D-transpeptidase FtsI">
    <location>
        <begin position="1"/>
        <end position="577"/>
    </location>
</feature>
<feature type="propeptide" id="PRO_0000017053" evidence="10">
    <location>
        <begin position="578"/>
        <end position="588"/>
    </location>
</feature>
<feature type="topological domain" description="Cytoplasmic" evidence="9">
    <location>
        <begin position="1"/>
        <end position="18"/>
    </location>
</feature>
<feature type="transmembrane region" description="Helical" evidence="1">
    <location>
        <begin position="19"/>
        <end position="39"/>
    </location>
</feature>
<feature type="topological domain" description="Periplasmic" evidence="9">
    <location>
        <begin position="40"/>
        <end position="577"/>
    </location>
</feature>
<feature type="active site" description="Acyl-ester intermediate" evidence="1 13">
    <location>
        <position position="307"/>
    </location>
</feature>
<feature type="mutagenesis site" description="Impairs septal localization." evidence="5">
    <original>R</original>
    <variation>C</variation>
    <variation>H</variation>
    <location>
        <position position="23"/>
    </location>
</feature>
<feature type="mutagenesis site" description="Impairs septal localization." evidence="5">
    <original>L</original>
    <variation>P</variation>
    <location>
        <position position="39"/>
    </location>
</feature>
<feature type="mutagenesis site" description="Impairs septal localization." evidence="5">
    <original>Q</original>
    <variation>H</variation>
    <location>
        <position position="46"/>
    </location>
</feature>
<feature type="mutagenesis site" description="Impairs recruitment of FtsN to the septal ring." evidence="5">
    <original>G</original>
    <variation>D</variation>
    <location>
        <position position="57"/>
    </location>
</feature>
<feature type="mutagenesis site" description="Impairs recruitment of FtsN to the septal ring." evidence="5">
    <original>S</original>
    <variation>F</variation>
    <variation>P</variation>
    <location>
        <position position="61"/>
    </location>
</feature>
<feature type="mutagenesis site" description="Impairs recruitment of FtsN to the septal ring." evidence="5">
    <original>L</original>
    <variation>P</variation>
    <location>
        <position position="62"/>
    </location>
</feature>
<feature type="mutagenesis site" description="Impairs recruitment of FtsN to the septal ring." evidence="5">
    <original>R</original>
    <variation>C</variation>
    <variation>H</variation>
    <location>
        <position position="210"/>
    </location>
</feature>
<feature type="mutagenesis site" description="Unable to bind penicillin." evidence="14">
    <original>S</original>
    <variation>A</variation>
    <variation>T</variation>
    <location>
        <position position="307"/>
    </location>
</feature>
<feature type="mutagenesis site" description="Still able to bind penicillin." evidence="14">
    <original>S</original>
    <variation>C</variation>
    <location>
        <position position="307"/>
    </location>
</feature>
<feature type="mutagenesis site" description="In PBPBR1; obtained after selection for increased resistance to cephalexin, causes a change in the shape of the cell: The polar caps are pointed." evidence="11">
    <original>N</original>
    <variation>S</variation>
    <location>
        <position position="361"/>
    </location>
</feature>
<feature type="strand" evidence="29">
    <location>
        <begin position="81"/>
        <end position="93"/>
    </location>
</feature>
<feature type="helix" evidence="29">
    <location>
        <begin position="95"/>
        <end position="100"/>
    </location>
</feature>
<feature type="helix" evidence="29">
    <location>
        <begin position="110"/>
        <end position="116"/>
    </location>
</feature>
<feature type="helix" evidence="29">
    <location>
        <begin position="121"/>
        <end position="128"/>
    </location>
</feature>
<feature type="strand" evidence="29">
    <location>
        <begin position="141"/>
        <end position="143"/>
    </location>
</feature>
<feature type="helix" evidence="29">
    <location>
        <begin position="145"/>
        <end position="153"/>
    </location>
</feature>
<feature type="strand" evidence="29">
    <location>
        <begin position="157"/>
        <end position="168"/>
    </location>
</feature>
<feature type="helix" evidence="29">
    <location>
        <begin position="172"/>
        <end position="174"/>
    </location>
</feature>
<feature type="helix" evidence="29">
    <location>
        <begin position="176"/>
        <end position="179"/>
    </location>
</feature>
<feature type="strand" evidence="29">
    <location>
        <begin position="188"/>
        <end position="190"/>
    </location>
</feature>
<feature type="helix" evidence="29">
    <location>
        <begin position="192"/>
        <end position="195"/>
    </location>
</feature>
<feature type="helix" evidence="29">
    <location>
        <begin position="197"/>
        <end position="200"/>
    </location>
</feature>
<feature type="strand" evidence="29">
    <location>
        <begin position="232"/>
        <end position="235"/>
    </location>
</feature>
<feature type="helix" evidence="28">
    <location>
        <begin position="238"/>
        <end position="254"/>
    </location>
</feature>
<feature type="strand" evidence="28">
    <location>
        <begin position="258"/>
        <end position="266"/>
    </location>
</feature>
<feature type="turn" evidence="28">
    <location>
        <begin position="267"/>
        <end position="269"/>
    </location>
</feature>
<feature type="strand" evidence="28">
    <location>
        <begin position="271"/>
        <end position="279"/>
    </location>
</feature>
<feature type="helix" evidence="29">
    <location>
        <begin position="291"/>
        <end position="293"/>
    </location>
</feature>
<feature type="helix" evidence="29">
    <location>
        <begin position="297"/>
        <end position="300"/>
    </location>
</feature>
<feature type="helix" evidence="28">
    <location>
        <begin position="306"/>
        <end position="309"/>
    </location>
</feature>
<feature type="helix" evidence="28">
    <location>
        <begin position="310"/>
        <end position="319"/>
    </location>
</feature>
<feature type="strand" evidence="28">
    <location>
        <begin position="328"/>
        <end position="330"/>
    </location>
</feature>
<feature type="strand" evidence="28">
    <location>
        <begin position="334"/>
        <end position="336"/>
    </location>
</feature>
<feature type="strand" evidence="28">
    <location>
        <begin position="339"/>
        <end position="341"/>
    </location>
</feature>
<feature type="strand" evidence="28">
    <location>
        <begin position="348"/>
        <end position="351"/>
    </location>
</feature>
<feature type="helix" evidence="28">
    <location>
        <begin position="352"/>
        <end position="357"/>
    </location>
</feature>
<feature type="helix" evidence="28">
    <location>
        <begin position="361"/>
        <end position="369"/>
    </location>
</feature>
<feature type="helix" evidence="28">
    <location>
        <begin position="374"/>
        <end position="382"/>
    </location>
</feature>
<feature type="turn" evidence="28">
    <location>
        <begin position="383"/>
        <end position="386"/>
    </location>
</feature>
<feature type="turn" evidence="28">
    <location>
        <begin position="394"/>
        <end position="397"/>
    </location>
</feature>
<feature type="helix" evidence="28">
    <location>
        <begin position="409"/>
        <end position="416"/>
    </location>
</feature>
<feature type="turn" evidence="29">
    <location>
        <begin position="418"/>
        <end position="420"/>
    </location>
</feature>
<feature type="helix" evidence="28">
    <location>
        <begin position="425"/>
        <end position="436"/>
    </location>
</feature>
<feature type="strand" evidence="28">
    <location>
        <begin position="439"/>
        <end position="441"/>
    </location>
</feature>
<feature type="strand" evidence="28">
    <location>
        <begin position="445"/>
        <end position="447"/>
    </location>
</feature>
<feature type="helix" evidence="28">
    <location>
        <begin position="461"/>
        <end position="471"/>
    </location>
</feature>
<feature type="helix" evidence="28">
    <location>
        <begin position="472"/>
        <end position="475"/>
    </location>
</feature>
<feature type="helix" evidence="28">
    <location>
        <begin position="482"/>
        <end position="484"/>
    </location>
</feature>
<feature type="strand" evidence="28">
    <location>
        <begin position="492"/>
        <end position="501"/>
    </location>
</feature>
<feature type="strand" evidence="27">
    <location>
        <begin position="503"/>
        <end position="505"/>
    </location>
</feature>
<feature type="strand" evidence="28">
    <location>
        <begin position="507"/>
        <end position="519"/>
    </location>
</feature>
<feature type="strand" evidence="29">
    <location>
        <begin position="521"/>
        <end position="523"/>
    </location>
</feature>
<feature type="strand" evidence="28">
    <location>
        <begin position="526"/>
        <end position="534"/>
    </location>
</feature>
<feature type="helix" evidence="28">
    <location>
        <begin position="542"/>
        <end position="545"/>
    </location>
</feature>
<feature type="helix" evidence="28">
    <location>
        <begin position="547"/>
        <end position="560"/>
    </location>
</feature>
<evidence type="ECO:0000255" key="1">
    <source>
        <dbReference type="HAMAP-Rule" id="MF_02080"/>
    </source>
</evidence>
<evidence type="ECO:0000269" key="2">
    <source>
    </source>
</evidence>
<evidence type="ECO:0000269" key="3">
    <source>
    </source>
</evidence>
<evidence type="ECO:0000269" key="4">
    <source>
    </source>
</evidence>
<evidence type="ECO:0000269" key="5">
    <source>
    </source>
</evidence>
<evidence type="ECO:0000269" key="6">
    <source>
    </source>
</evidence>
<evidence type="ECO:0000269" key="7">
    <source>
    </source>
</evidence>
<evidence type="ECO:0000269" key="8">
    <source>
    </source>
</evidence>
<evidence type="ECO:0000269" key="9">
    <source>
    </source>
</evidence>
<evidence type="ECO:0000269" key="10">
    <source>
    </source>
</evidence>
<evidence type="ECO:0000269" key="11">
    <source>
    </source>
</evidence>
<evidence type="ECO:0000269" key="12">
    <source>
    </source>
</evidence>
<evidence type="ECO:0000269" key="13">
    <source>
    </source>
</evidence>
<evidence type="ECO:0000269" key="14">
    <source>
    </source>
</evidence>
<evidence type="ECO:0000269" key="15">
    <source>
    </source>
</evidence>
<evidence type="ECO:0000269" key="16">
    <source>
    </source>
</evidence>
<evidence type="ECO:0000269" key="17">
    <source>
    </source>
</evidence>
<evidence type="ECO:0000269" key="18">
    <source>
    </source>
</evidence>
<evidence type="ECO:0000269" key="19">
    <source>
    </source>
</evidence>
<evidence type="ECO:0000269" key="20">
    <source>
    </source>
</evidence>
<evidence type="ECO:0000269" key="21">
    <source>
    </source>
</evidence>
<evidence type="ECO:0000303" key="22">
    <source>
    </source>
</evidence>
<evidence type="ECO:0000303" key="23">
    <source>
    </source>
</evidence>
<evidence type="ECO:0000303" key="24">
    <source>
    </source>
</evidence>
<evidence type="ECO:0000305" key="25"/>
<evidence type="ECO:0000305" key="26">
    <source>
    </source>
</evidence>
<evidence type="ECO:0007829" key="27">
    <source>
        <dbReference type="PDB" id="6HZQ"/>
    </source>
</evidence>
<evidence type="ECO:0007829" key="28">
    <source>
        <dbReference type="PDB" id="6I1I"/>
    </source>
</evidence>
<evidence type="ECO:0007829" key="29">
    <source>
        <dbReference type="PDB" id="7ONW"/>
    </source>
</evidence>
<accession>P0AD68</accession>
<accession>P04286</accession>
<dbReference type="EC" id="3.4.16.4" evidence="1 12 15 16"/>
<dbReference type="EMBL" id="K00137">
    <property type="protein sequence ID" value="AAA24300.1"/>
    <property type="molecule type" value="Genomic_DNA"/>
</dbReference>
<dbReference type="EMBL" id="X55034">
    <property type="protein sequence ID" value="CAA38861.1"/>
    <property type="molecule type" value="Genomic_DNA"/>
</dbReference>
<dbReference type="EMBL" id="U00096">
    <property type="protein sequence ID" value="AAC73195.1"/>
    <property type="molecule type" value="Genomic_DNA"/>
</dbReference>
<dbReference type="EMBL" id="AP009048">
    <property type="protein sequence ID" value="BAB96652.1"/>
    <property type="molecule type" value="Genomic_DNA"/>
</dbReference>
<dbReference type="EMBL" id="S49802">
    <property type="protein sequence ID" value="AAB24312.1"/>
    <property type="molecule type" value="Genomic_DNA"/>
</dbReference>
<dbReference type="EMBL" id="S49875">
    <property type="protein sequence ID" value="AAB24310.1"/>
    <property type="molecule type" value="Genomic_DNA"/>
</dbReference>
<dbReference type="EMBL" id="X55814">
    <property type="protein sequence ID" value="CAA39333.1"/>
    <property type="molecule type" value="Genomic_DNA"/>
</dbReference>
<dbReference type="PIR" id="A93123">
    <property type="entry name" value="ZPECP3"/>
</dbReference>
<dbReference type="RefSeq" id="NP_414626.1">
    <property type="nucleotide sequence ID" value="NC_000913.3"/>
</dbReference>
<dbReference type="RefSeq" id="WP_000642196.1">
    <property type="nucleotide sequence ID" value="NZ_LN832404.1"/>
</dbReference>
<dbReference type="PDB" id="6HZQ">
    <property type="method" value="X-ray"/>
    <property type="resolution" value="1.95 A"/>
    <property type="chains" value="A=234-588"/>
</dbReference>
<dbReference type="PDB" id="6I1I">
    <property type="method" value="X-ray"/>
    <property type="resolution" value="1.75 A"/>
    <property type="chains" value="A=234-279, A=295-588"/>
</dbReference>
<dbReference type="PDB" id="7ONW">
    <property type="method" value="X-ray"/>
    <property type="resolution" value="2.70 A"/>
    <property type="chains" value="A=49-588"/>
</dbReference>
<dbReference type="PDB" id="8RTZ">
    <property type="method" value="X-ray"/>
    <property type="resolution" value="1.52 A"/>
    <property type="chains" value="AAA=234-279, AAA=295-588"/>
</dbReference>
<dbReference type="PDBsum" id="6HZQ"/>
<dbReference type="PDBsum" id="6I1I"/>
<dbReference type="PDBsum" id="7ONW"/>
<dbReference type="PDBsum" id="8RTZ"/>
<dbReference type="SMR" id="P0AD68"/>
<dbReference type="BioGRID" id="4261637">
    <property type="interactions" value="169"/>
</dbReference>
<dbReference type="BioGRID" id="849200">
    <property type="interactions" value="2"/>
</dbReference>
<dbReference type="ComplexPortal" id="CPX-1936">
    <property type="entry name" value="Divisome complex"/>
</dbReference>
<dbReference type="DIP" id="DIP-47950N"/>
<dbReference type="FunCoup" id="P0AD68">
    <property type="interactions" value="276"/>
</dbReference>
<dbReference type="IntAct" id="P0AD68">
    <property type="interactions" value="18"/>
</dbReference>
<dbReference type="MINT" id="P0AD68"/>
<dbReference type="STRING" id="511145.b0084"/>
<dbReference type="ChEMBL" id="CHEMBL2354204"/>
<dbReference type="DrugBank" id="DB00355">
    <property type="generic name" value="Aztreonam"/>
</dbReference>
<dbReference type="DrugBank" id="DB01602">
    <property type="generic name" value="Bacampicillin"/>
</dbReference>
<dbReference type="DrugBank" id="DB01053">
    <property type="generic name" value="Benzylpenicillin"/>
</dbReference>
<dbReference type="DrugBank" id="DB00578">
    <property type="generic name" value="Carbenicillin"/>
</dbReference>
<dbReference type="DrugBank" id="DB09319">
    <property type="generic name" value="Carindacillin"/>
</dbReference>
<dbReference type="DrugBank" id="DB01327">
    <property type="generic name" value="Cefazolin"/>
</dbReference>
<dbReference type="DrugBank" id="DB01413">
    <property type="generic name" value="Cefepime"/>
</dbReference>
<dbReference type="DrugBank" id="DB00671">
    <property type="generic name" value="Cefixime"/>
</dbReference>
<dbReference type="DrugBank" id="DB00267">
    <property type="generic name" value="Cefmenoxime"/>
</dbReference>
<dbReference type="DrugBank" id="DB00274">
    <property type="generic name" value="Cefmetazole"/>
</dbReference>
<dbReference type="DrugBank" id="DB01328">
    <property type="generic name" value="Cefonicid"/>
</dbReference>
<dbReference type="DrugBank" id="DB01329">
    <property type="generic name" value="Cefoperazone"/>
</dbReference>
<dbReference type="DrugBank" id="DB00229">
    <property type="generic name" value="Cefotiam"/>
</dbReference>
<dbReference type="DrugBank" id="DB01331">
    <property type="generic name" value="Cefoxitin"/>
</dbReference>
<dbReference type="DrugBank" id="DB00430">
    <property type="generic name" value="Cefpiramide"/>
</dbReference>
<dbReference type="DrugBank" id="DB01416">
    <property type="generic name" value="Cefpodoxime"/>
</dbReference>
<dbReference type="DrugBank" id="DB06590">
    <property type="generic name" value="Ceftaroline fosamil"/>
</dbReference>
<dbReference type="DrugBank" id="DB00438">
    <property type="generic name" value="Ceftazidime"/>
</dbReference>
<dbReference type="DrugBank" id="DB01415">
    <property type="generic name" value="Ceftibuten"/>
</dbReference>
<dbReference type="DrugBank" id="DB04918">
    <property type="generic name" value="Ceftobiprole"/>
</dbReference>
<dbReference type="DrugBank" id="DB09050">
    <property type="generic name" value="Ceftolozane"/>
</dbReference>
<dbReference type="DrugBank" id="DB03313">
    <property type="generic name" value="Cephalosporin C"/>
</dbReference>
<dbReference type="DrugBank" id="DB01000">
    <property type="generic name" value="Cyclacillin"/>
</dbReference>
<dbReference type="DrugBank" id="DB00303">
    <property type="generic name" value="Ertapenem"/>
</dbReference>
<dbReference type="DrugBank" id="DB04570">
    <property type="generic name" value="Latamoxef"/>
</dbReference>
<dbReference type="DrugBank" id="DB00948">
    <property type="generic name" value="Mezlocillin"/>
</dbReference>
<dbReference type="DrugBank" id="DB09320">
    <property type="generic name" value="Procaine benzylpenicillin"/>
</dbReference>
<dbReference type="DrugBank" id="DB16335">
    <property type="generic name" value="Sulopenem etzadroxil"/>
</dbReference>
<dbReference type="DrugCentral" id="P0AD68"/>
<dbReference type="MEROPS" id="X52.001"/>
<dbReference type="jPOST" id="P0AD68"/>
<dbReference type="PaxDb" id="511145-b0084"/>
<dbReference type="EnsemblBacteria" id="AAC73195">
    <property type="protein sequence ID" value="AAC73195"/>
    <property type="gene ID" value="b0084"/>
</dbReference>
<dbReference type="GeneID" id="75202099"/>
<dbReference type="GeneID" id="944799"/>
<dbReference type="KEGG" id="ecj:JW0082"/>
<dbReference type="KEGG" id="eco:b0084"/>
<dbReference type="KEGG" id="ecoc:C3026_00325"/>
<dbReference type="PATRIC" id="fig|1411691.4.peg.2196"/>
<dbReference type="EchoBASE" id="EB0337"/>
<dbReference type="eggNOG" id="COG0768">
    <property type="taxonomic scope" value="Bacteria"/>
</dbReference>
<dbReference type="HOGENOM" id="CLU_009289_6_2_6"/>
<dbReference type="InParanoid" id="P0AD68"/>
<dbReference type="OMA" id="TVYCAIQ"/>
<dbReference type="OrthoDB" id="9789078at2"/>
<dbReference type="PhylomeDB" id="P0AD68"/>
<dbReference type="BioCyc" id="EcoCyc:EG10341-MONOMER"/>
<dbReference type="BioCyc" id="MetaCyc:EG10341-MONOMER"/>
<dbReference type="UniPathway" id="UPA00219"/>
<dbReference type="PRO" id="PR:P0AD68"/>
<dbReference type="Proteomes" id="UP000000625">
    <property type="component" value="Chromosome"/>
</dbReference>
<dbReference type="GO" id="GO:0032153">
    <property type="term" value="C:cell division site"/>
    <property type="evidence" value="ECO:0000314"/>
    <property type="project" value="EcoliWiki"/>
</dbReference>
<dbReference type="GO" id="GO:1990586">
    <property type="term" value="C:divisome complex"/>
    <property type="evidence" value="ECO:0000303"/>
    <property type="project" value="ComplexPortal"/>
</dbReference>
<dbReference type="GO" id="GO:0005886">
    <property type="term" value="C:plasma membrane"/>
    <property type="evidence" value="ECO:0000318"/>
    <property type="project" value="GO_Central"/>
</dbReference>
<dbReference type="GO" id="GO:0008658">
    <property type="term" value="F:penicillin binding"/>
    <property type="evidence" value="ECO:0000314"/>
    <property type="project" value="EcoliWiki"/>
</dbReference>
<dbReference type="GO" id="GO:0008955">
    <property type="term" value="F:peptidoglycan glycosyltransferase activity"/>
    <property type="evidence" value="ECO:0000314"/>
    <property type="project" value="EcoliWiki"/>
</dbReference>
<dbReference type="GO" id="GO:0009002">
    <property type="term" value="F:serine-type D-Ala-D-Ala carboxypeptidase activity"/>
    <property type="evidence" value="ECO:0007669"/>
    <property type="project" value="UniProtKB-UniRule"/>
</dbReference>
<dbReference type="GO" id="GO:0051301">
    <property type="term" value="P:cell division"/>
    <property type="evidence" value="ECO:0000315"/>
    <property type="project" value="EcoliWiki"/>
</dbReference>
<dbReference type="GO" id="GO:0071555">
    <property type="term" value="P:cell wall organization"/>
    <property type="evidence" value="ECO:0000318"/>
    <property type="project" value="GO_Central"/>
</dbReference>
<dbReference type="GO" id="GO:0000917">
    <property type="term" value="P:division septum assembly"/>
    <property type="evidence" value="ECO:0000303"/>
    <property type="project" value="ComplexPortal"/>
</dbReference>
<dbReference type="GO" id="GO:0043093">
    <property type="term" value="P:FtsZ-dependent cytokinesis"/>
    <property type="evidence" value="ECO:0000303"/>
    <property type="project" value="ComplexPortal"/>
</dbReference>
<dbReference type="GO" id="GO:0009252">
    <property type="term" value="P:peptidoglycan biosynthetic process"/>
    <property type="evidence" value="ECO:0007669"/>
    <property type="project" value="UniProtKB-UniRule"/>
</dbReference>
<dbReference type="GO" id="GO:0006508">
    <property type="term" value="P:proteolysis"/>
    <property type="evidence" value="ECO:0007669"/>
    <property type="project" value="UniProtKB-KW"/>
</dbReference>
<dbReference type="GO" id="GO:0008360">
    <property type="term" value="P:regulation of cell shape"/>
    <property type="evidence" value="ECO:0007669"/>
    <property type="project" value="UniProtKB-KW"/>
</dbReference>
<dbReference type="GO" id="GO:0009410">
    <property type="term" value="P:response to xenobiotic stimulus"/>
    <property type="evidence" value="ECO:0000315"/>
    <property type="project" value="EcoliWiki"/>
</dbReference>
<dbReference type="FunFam" id="1.10.150.770:FF:000001">
    <property type="entry name" value="Peptidoglycan D,D-transpeptidase FtsI"/>
    <property type="match status" value="1"/>
</dbReference>
<dbReference type="FunFam" id="3.40.710.10:FF:000003">
    <property type="entry name" value="Peptidoglycan D,D-transpeptidase FtsI"/>
    <property type="match status" value="1"/>
</dbReference>
<dbReference type="FunFam" id="3.90.1310.10:FF:000003">
    <property type="entry name" value="Peptidoglycan D,D-transpeptidase FtsI"/>
    <property type="match status" value="1"/>
</dbReference>
<dbReference type="Gene3D" id="1.10.150.770">
    <property type="match status" value="1"/>
</dbReference>
<dbReference type="Gene3D" id="3.30.450.330">
    <property type="match status" value="1"/>
</dbReference>
<dbReference type="Gene3D" id="3.40.710.10">
    <property type="entry name" value="DD-peptidase/beta-lactamase superfamily"/>
    <property type="match status" value="1"/>
</dbReference>
<dbReference type="Gene3D" id="3.90.1310.10">
    <property type="entry name" value="Penicillin-binding protein 2a (Domain 2)"/>
    <property type="match status" value="1"/>
</dbReference>
<dbReference type="HAMAP" id="MF_02080">
    <property type="entry name" value="FtsI_transpept"/>
    <property type="match status" value="1"/>
</dbReference>
<dbReference type="InterPro" id="IPR050515">
    <property type="entry name" value="Bact_Transpept/Beta-Lactamase"/>
</dbReference>
<dbReference type="InterPro" id="IPR012338">
    <property type="entry name" value="Beta-lactam/transpept-like"/>
</dbReference>
<dbReference type="InterPro" id="IPR037532">
    <property type="entry name" value="FtsI_transpept"/>
</dbReference>
<dbReference type="InterPro" id="IPR005311">
    <property type="entry name" value="PBP_dimer"/>
</dbReference>
<dbReference type="InterPro" id="IPR036138">
    <property type="entry name" value="PBP_dimer_sf"/>
</dbReference>
<dbReference type="InterPro" id="IPR001460">
    <property type="entry name" value="PCN-bd_Tpept"/>
</dbReference>
<dbReference type="NCBIfam" id="NF011685">
    <property type="entry name" value="PRK15105.1"/>
    <property type="match status" value="1"/>
</dbReference>
<dbReference type="PANTHER" id="PTHR30627">
    <property type="entry name" value="PEPTIDOGLYCAN D,D-TRANSPEPTIDASE"/>
    <property type="match status" value="1"/>
</dbReference>
<dbReference type="PANTHER" id="PTHR30627:SF1">
    <property type="entry name" value="PEPTIDOGLYCAN D,D-TRANSPEPTIDASE FTSI"/>
    <property type="match status" value="1"/>
</dbReference>
<dbReference type="Pfam" id="PF03717">
    <property type="entry name" value="PBP_dimer"/>
    <property type="match status" value="1"/>
</dbReference>
<dbReference type="Pfam" id="PF00905">
    <property type="entry name" value="Transpeptidase"/>
    <property type="match status" value="1"/>
</dbReference>
<dbReference type="SUPFAM" id="SSF56601">
    <property type="entry name" value="beta-lactamase/transpeptidase-like"/>
    <property type="match status" value="1"/>
</dbReference>
<dbReference type="SUPFAM" id="SSF56519">
    <property type="entry name" value="Penicillin binding protein dimerisation domain"/>
    <property type="match status" value="1"/>
</dbReference>
<organism>
    <name type="scientific">Escherichia coli (strain K12)</name>
    <dbReference type="NCBI Taxonomy" id="83333"/>
    <lineage>
        <taxon>Bacteria</taxon>
        <taxon>Pseudomonadati</taxon>
        <taxon>Pseudomonadota</taxon>
        <taxon>Gammaproteobacteria</taxon>
        <taxon>Enterobacterales</taxon>
        <taxon>Enterobacteriaceae</taxon>
        <taxon>Escherichia</taxon>
    </lineage>
</organism>
<reference key="1">
    <citation type="journal article" date="1983" name="Mol. Gen. Genet.">
        <title>On the process of cellular division in Escherichia coli: nucleotide sequence of the gene for penicillin-binding protein 3.</title>
        <authorList>
            <person name="Nakamura M."/>
            <person name="Maruyama I.N."/>
            <person name="Soma M."/>
            <person name="Kato J."/>
            <person name="Suzuki H."/>
            <person name="Horota Y."/>
        </authorList>
    </citation>
    <scope>NUCLEOTIDE SEQUENCE [GENOMIC DNA]</scope>
    <source>
        <strain>K12</strain>
    </source>
</reference>
<reference key="2">
    <citation type="journal article" date="1992" name="Nucleic Acids Res.">
        <title>Systematic sequencing of the Escherichia coli genome: analysis of the 0-2.4 min region.</title>
        <authorList>
            <person name="Yura T."/>
            <person name="Mori H."/>
            <person name="Nagai H."/>
            <person name="Nagata T."/>
            <person name="Ishihama A."/>
            <person name="Fujita N."/>
            <person name="Isono K."/>
            <person name="Mizobuchi K."/>
            <person name="Nakata A."/>
        </authorList>
    </citation>
    <scope>NUCLEOTIDE SEQUENCE [LARGE SCALE GENOMIC DNA]</scope>
    <source>
        <strain>K12</strain>
    </source>
</reference>
<reference key="3">
    <citation type="journal article" date="1997" name="Science">
        <title>The complete genome sequence of Escherichia coli K-12.</title>
        <authorList>
            <person name="Blattner F.R."/>
            <person name="Plunkett G. III"/>
            <person name="Bloch C.A."/>
            <person name="Perna N.T."/>
            <person name="Burland V."/>
            <person name="Riley M."/>
            <person name="Collado-Vides J."/>
            <person name="Glasner J.D."/>
            <person name="Rode C.K."/>
            <person name="Mayhew G.F."/>
            <person name="Gregor J."/>
            <person name="Davis N.W."/>
            <person name="Kirkpatrick H.A."/>
            <person name="Goeden M.A."/>
            <person name="Rose D.J."/>
            <person name="Mau B."/>
            <person name="Shao Y."/>
        </authorList>
    </citation>
    <scope>NUCLEOTIDE SEQUENCE [LARGE SCALE GENOMIC DNA]</scope>
    <source>
        <strain>K12 / MG1655 / ATCC 47076</strain>
    </source>
</reference>
<reference key="4">
    <citation type="journal article" date="2006" name="Mol. Syst. Biol.">
        <title>Highly accurate genome sequences of Escherichia coli K-12 strains MG1655 and W3110.</title>
        <authorList>
            <person name="Hayashi K."/>
            <person name="Morooka N."/>
            <person name="Yamamoto Y."/>
            <person name="Fujita K."/>
            <person name="Isono K."/>
            <person name="Choi S."/>
            <person name="Ohtsubo E."/>
            <person name="Baba T."/>
            <person name="Wanner B.L."/>
            <person name="Mori H."/>
            <person name="Horiuchi T."/>
        </authorList>
    </citation>
    <scope>NUCLEOTIDE SEQUENCE [LARGE SCALE GENOMIC DNA]</scope>
    <source>
        <strain>K12 / W3110 / ATCC 27325 / DSM 5911</strain>
    </source>
</reference>
<reference key="5">
    <citation type="journal article" date="1992" name="J. Bacteriol.">
        <title>Escherichia coli mraR gene involved in cell growth and division.</title>
        <authorList>
            <person name="Ueki M."/>
            <person name="Wachi M."/>
            <person name="Jung H.K."/>
            <person name="Ishino F."/>
            <person name="Matsuhashi M."/>
        </authorList>
    </citation>
    <scope>NUCLEOTIDE SEQUENCE [GENOMIC DNA] OF 1-71</scope>
    <source>
        <strain>JE1011</strain>
    </source>
</reference>
<reference key="6">
    <citation type="journal article" date="1992" name="J. Bacteriol.">
        <title>FtsL, an essential cytoplasmic membrane protein involved in cell division in Escherichia coli.</title>
        <authorList>
            <person name="Guzman L.-M."/>
            <person name="Barondess J.J."/>
            <person name="Beckwith J."/>
        </authorList>
    </citation>
    <scope>NUCLEOTIDE SEQUENCE [GENOMIC DNA] OF 1-41</scope>
</reference>
<reference key="7">
    <citation type="journal article" date="1990" name="Biochem. J.">
        <title>Revised interpretation of the sequence containing the murE gene encoding the UDP-N-acetylmuramyl-tripeptide synthetase of Escherichia coli.</title>
        <authorList>
            <person name="Michaud C."/>
            <person name="Parquet C."/>
            <person name="Flouret B."/>
            <person name="Blanot D."/>
            <person name="van Heijenoort J."/>
        </authorList>
    </citation>
    <scope>NUCLEOTIDE SEQUENCE [GENOMIC DNA] OF 550-588</scope>
</reference>
<reference key="8">
    <citation type="journal article" date="1975" name="Proc. Natl. Acad. Sci. U.S.A.">
        <title>Distinct penicillin binding proteins involved in the division, elongation, and shape of Escherichia coli K12.</title>
        <authorList>
            <person name="Spratt B.G."/>
        </authorList>
    </citation>
    <scope>FUNCTION IN CELL DIVISION</scope>
    <source>
        <strain>K12</strain>
    </source>
</reference>
<reference key="9">
    <citation type="journal article" date="1981" name="Biochem. Biophys. Res. Commun.">
        <title>Peptidoglycan synthetic enzyme activities of highly purified penicillin-binding protein 3 in Escherichia coli: a septum-forming reaction sequence.</title>
        <authorList>
            <person name="Ishino F."/>
            <person name="Matsuhashi M."/>
        </authorList>
    </citation>
    <scope>FUNCTION</scope>
    <scope>CATALYTIC ACTIVITY</scope>
    <scope>ACTIVITY REGULATION</scope>
</reference>
<reference key="10">
    <citation type="journal article" date="1981" name="J. Bacteriol.">
        <title>Evidence for involvement of penicillin-binding protein 3 in murein synthesis during septation but not during cell elongation.</title>
        <authorList>
            <person name="Botta G.A."/>
            <person name="Park J.T."/>
        </authorList>
    </citation>
    <scope>FUNCTION</scope>
    <scope>CATALYTIC ACTIVITY</scope>
    <scope>ACTIVITY REGULATION</scope>
    <scope>PATHWAY</scope>
</reference>
<reference key="11">
    <citation type="journal article" date="1985" name="J. Bacteriol.">
        <title>Identification of the active site in penicillin-binding protein 3 of Escherichia coli.</title>
        <authorList>
            <person name="Nicholas R.A."/>
            <person name="Strominger J.L."/>
            <person name="Suzuki H."/>
            <person name="Hirota Y."/>
        </authorList>
    </citation>
    <scope>ACTIVITY REGULATION</scope>
    <scope>ACTIVE SITE</scope>
</reference>
<reference key="12">
    <citation type="journal article" date="1985" name="Mol. Gen. Genet.">
        <title>Binding of penicillin to thiol-penicillin-binding protein 3 of Escherichia coli: identification of its active site.</title>
        <authorList>
            <person name="Houba-Herin N."/>
            <person name="Hara H."/>
            <person name="Inouye M."/>
            <person name="Hirota Y."/>
        </authorList>
    </citation>
    <scope>MUTAGENESIS OF SER-307</scope>
</reference>
<reference key="13">
    <citation type="journal article" date="1986" name="J. Bacteriol.">
        <title>Activity of penicillin-binding protein 3 from Escherichia coli.</title>
        <authorList>
            <person name="Pisabarro A.G."/>
            <person name="Prats R."/>
            <person name="Vaquez D."/>
            <person name="Rodriguez-Tebar A."/>
        </authorList>
    </citation>
    <scope>FUNCTION</scope>
    <scope>CATALYTIC ACTIVITY</scope>
</reference>
<reference key="14">
    <citation type="journal article" date="1989" name="J. Bacteriol.">
        <title>Determination of the cleavage site involved in C-terminal processing of penicillin-binding protein 3 of Escherichia coli.</title>
        <authorList>
            <person name="Nagasawa H."/>
            <person name="Sakagami Y."/>
            <person name="Suzuki A."/>
            <person name="Suzuki H."/>
            <person name="Hara H."/>
            <person name="Hirota Y."/>
        </authorList>
    </citation>
    <scope>PROTEOLYTIC PROCESSING</scope>
</reference>
<reference key="15">
    <citation type="journal article" date="1988" name="J. Bacteriol.">
        <title>An amino acid substitution in penicillin-binding protein 3 creates pointed polar caps in Escherichia coli.</title>
        <authorList>
            <person name="Taschner P.E.M."/>
            <person name="Ypenburg N."/>
            <person name="Spratt B.G."/>
            <person name="Woldringh C.L."/>
        </authorList>
    </citation>
    <scope>MUTAGENESIS OF ASN-361</scope>
</reference>
<reference key="16">
    <citation type="journal article" date="1989" name="Mol. Microbiol.">
        <title>Membrane topology of penicillin-binding protein 3 of Escherichia coli.</title>
        <authorList>
            <person name="Bowler L.D."/>
            <person name="Spratt B.G."/>
        </authorList>
    </citation>
    <scope>SUBCELLULAR LOCATION</scope>
    <scope>TOPOLOGY</scope>
</reference>
<reference key="17">
    <citation type="journal article" date="1997" name="Mol. Microbiol.">
        <title>FtsN, a late recruit to the septum in Escherichia coli.</title>
        <authorList>
            <person name="Addinall S.G."/>
            <person name="Cao C."/>
            <person name="Lutkenhaus J."/>
        </authorList>
    </citation>
    <scope>FUNCTION IN RECRUITMENT OF FTSN</scope>
    <source>
        <strain>K12</strain>
    </source>
</reference>
<reference key="18">
    <citation type="journal article" date="1997" name="Mol. Microbiol.">
        <title>Localization of the Escherichia coli cell division protein Ftsl (PBP3) to the division site and cell pole.</title>
        <authorList>
            <person name="Weiss D.S."/>
            <person name="Pogliano K."/>
            <person name="Carson M."/>
            <person name="Guzman L.M."/>
            <person name="Fraipont C."/>
            <person name="Nguyen-Disteche M."/>
            <person name="Losick R."/>
            <person name="Beckwith J."/>
        </authorList>
    </citation>
    <scope>SUBCELLULAR LOCATION</scope>
</reference>
<reference key="19">
    <citation type="journal article" date="1998" name="Cell. Mol. Life Sci.">
        <title>The structure and function of Escherichia coli penicillin-binding protein 3.</title>
        <authorList>
            <person name="Nguyen-Disteche M."/>
            <person name="Fraipont C."/>
            <person name="Buddelmeijer N."/>
            <person name="Nanninga N."/>
        </authorList>
    </citation>
    <scope>FUNCTION</scope>
    <scope>SUBCELLULAR LOCATION</scope>
    <scope>DOMAIN</scope>
</reference>
<reference key="20">
    <citation type="journal article" date="1998" name="J. Bacteriol.">
        <title>FtsI and FtsW are localized to the septum in Escherichia coli.</title>
        <authorList>
            <person name="Wang L."/>
            <person name="Khattar M.K."/>
            <person name="Donachie W.D."/>
            <person name="Lutkenhaus J."/>
        </authorList>
    </citation>
    <scope>SUBCELLULAR LOCATION</scope>
    <source>
        <strain>K12</strain>
    </source>
</reference>
<reference key="21">
    <citation type="journal article" date="1999" name="J. Bacteriol.">
        <title>Localization of FtsI (PBP3) to the septal ring requires its membrane anchor, the Z ring, FtsA, FtsQ, and FtsL.</title>
        <authorList>
            <person name="Weiss D.S."/>
            <person name="Chen J.C."/>
            <person name="Ghigo J.M."/>
            <person name="Boyd D."/>
            <person name="Beckwith J."/>
        </authorList>
    </citation>
    <scope>SUBCELLULAR LOCATION</scope>
</reference>
<reference key="22">
    <citation type="journal article" date="2001" name="Mol. Microbiol.">
        <title>FtsQ, FtsL and FtsI require FtsK, but not FtsN, for co-localization with FtsZ during Escherichia coli cell division.</title>
        <authorList>
            <person name="Chen J.C."/>
            <person name="Beckwith J."/>
        </authorList>
    </citation>
    <scope>SUBCELLULAR LOCATION</scope>
    <source>
        <strain>K12 / MC4100 / ATCC 35695 / DSM 6574</strain>
    </source>
</reference>
<reference key="23">
    <citation type="journal article" date="2002" name="J. Bacteriol.">
        <title>The Escherichia coli cell division protein FtsW is required to recruit its cognate transpeptidase, FtsI (PBP3), to the division site.</title>
        <authorList>
            <person name="Mercer K.L."/>
            <person name="Weiss D.S."/>
        </authorList>
    </citation>
    <scope>SUBCELLULAR LOCATION</scope>
    <source>
        <strain>K12</strain>
    </source>
</reference>
<reference key="24">
    <citation type="journal article" date="2004" name="J. Bacteriol.">
        <title>Genetic analysis of the cell division protein FtsI (PBP3): amino acid substitutions that impair septal localization of FtsI and recruitment of FtsN.</title>
        <authorList>
            <person name="Wissel M.C."/>
            <person name="Weiss D.S."/>
        </authorList>
    </citation>
    <scope>DOMAIN</scope>
    <scope>MUTAGENESIS OF ARG-23; LEU-39; GLN-46; GLY-57; SER-61; LEU-62 AND ARG-210</scope>
</reference>
<reference key="25">
    <citation type="journal article" date="2005" name="J. Bacteriol.">
        <title>The transmembrane helix of the Escherichia coli division protein FtsI localizes to the septal ring.</title>
        <authorList>
            <person name="Wissel M.C."/>
            <person name="Wendt J.L."/>
            <person name="Mitchell C.J."/>
            <person name="Weiss D.S."/>
        </authorList>
    </citation>
    <scope>SUBCELLULAR LOCATION</scope>
    <scope>DOMAIN</scope>
</reference>
<reference key="26">
    <citation type="journal article" date="2007" name="Microbiology">
        <title>Three functional subdomains of the Escherichia coli FtsQ protein are involved in its interaction with the other division proteins.</title>
        <authorList>
            <person name="D'Ulisse V."/>
            <person name="Fagioli M."/>
            <person name="Ghelardini P."/>
            <person name="Paolozzi L."/>
        </authorList>
    </citation>
    <scope>INTERACTION WITH FTSQ</scope>
    <source>
        <strain>K12</strain>
    </source>
</reference>
<reference key="27">
    <citation type="journal article" date="2011" name="Microbiology">
        <title>The integral membrane FtsW protein and peptidoglycan synthase PBP3 form a subcomplex in Escherichia coli.</title>
        <authorList>
            <person name="Fraipont C."/>
            <person name="Alexeeva S."/>
            <person name="Wolf B."/>
            <person name="van der Ploeg R."/>
            <person name="Schloesser M."/>
            <person name="den Blaauwen T."/>
            <person name="Nguyen-Disteche M."/>
        </authorList>
    </citation>
    <scope>SUBUNIT</scope>
    <scope>INTERACTION WITH FTSW</scope>
    <scope>DOMAIN</scope>
</reference>
<comment type="function">
    <text evidence="2 12 15 16 17 20">Essential cell division protein that catalyzes cross-linking of the peptidoglycan cell wall at the division septum (PubMed:1103132, PubMed:3531167, PubMed:6450748, PubMed:7030331, PubMed:9614966). Required for localization of FtsN (PubMed:9282742).</text>
</comment>
<comment type="catalytic activity">
    <reaction evidence="1 12 15 16">
        <text>Preferential cleavage: (Ac)2-L-Lys-D-Ala-|-D-Ala. Also transpeptidation of peptidyl-alanyl moieties that are N-acyl substituents of D-alanine.</text>
        <dbReference type="EC" id="3.4.16.4"/>
    </reaction>
</comment>
<comment type="activity regulation">
    <text evidence="13 15 16">Inhibited by beta-lactam antibiotics such as penicillin, moenomycin, macarbomycin, furazlocillin and piperacillin. Antibiotics inhibit the activity by binding to the catalytic serine.</text>
</comment>
<comment type="pathway">
    <text evidence="1 15">Cell wall biogenesis; peptidoglycan biosynthesis.</text>
</comment>
<comment type="subunit">
    <text evidence="7 8">Homodimer (PubMed:20847002). Forms a complex with FtsW (PubMed:20847002). Interacts with FtsQ (PubMed:17185541).</text>
</comment>
<comment type="interaction">
    <interactant intactId="EBI-548564">
        <id>P0AD68</id>
    </interactant>
    <interactant intactId="EBI-1119082">
        <id>P0AEN4</id>
        <label>ftsL</label>
    </interactant>
    <organismsDiffer>false</organismsDiffer>
    <experiments>4</experiments>
</comment>
<comment type="interaction">
    <interactant intactId="EBI-548564">
        <id>P0AD68</id>
    </interactant>
    <interactant intactId="EBI-1134233">
        <id>P29131</id>
        <label>ftsN</label>
    </interactant>
    <organismsDiffer>false</organismsDiffer>
    <experiments>3</experiments>
</comment>
<comment type="interaction">
    <interactant intactId="EBI-548564">
        <id>P0AD68</id>
    </interactant>
    <interactant intactId="EBI-1130157">
        <id>P06136</id>
        <label>ftsQ</label>
    </interactant>
    <organismsDiffer>false</organismsDiffer>
    <experiments>5</experiments>
</comment>
<comment type="interaction">
    <interactant intactId="EBI-548564">
        <id>P0AD68</id>
    </interactant>
    <interactant intactId="EBI-1214767">
        <id>P0ABG4</id>
        <label>ftsW</label>
    </interactant>
    <organismsDiffer>false</organismsDiffer>
    <experiments>7</experiments>
</comment>
<comment type="interaction">
    <interactant intactId="EBI-548564">
        <id>P0AD68</id>
    </interactant>
    <interactant intactId="EBI-909769">
        <id>P02919</id>
        <label>mrcB</label>
    </interactant>
    <organismsDiffer>false</organismsDiffer>
    <experiments>3</experiments>
</comment>
<comment type="interaction">
    <interactant intactId="EBI-548564">
        <id>P0AD68</id>
    </interactant>
    <interactant intactId="EBI-558469">
        <id>P46022</id>
        <label>mtgA</label>
    </interactant>
    <organismsDiffer>false</organismsDiffer>
    <experiments>3</experiments>
</comment>
<comment type="interaction">
    <interactant intactId="EBI-548564">
        <id>P0AD68</id>
    </interactant>
    <interactant intactId="EBI-1214577">
        <id>P58034</id>
        <label>ymgF</label>
    </interactant>
    <organismsDiffer>false</organismsDiffer>
    <experiments>3</experiments>
</comment>
<comment type="interaction">
    <interactant intactId="EBI-548564">
        <id>P0AD68</id>
    </interactant>
    <interactant intactId="EBI-6446264">
        <id>Q8DQM0</id>
        <label>divIB</label>
    </interactant>
    <organismsDiffer>true</organismsDiffer>
    <experiments>3</experiments>
</comment>
<comment type="subcellular location">
    <subcellularLocation>
        <location evidence="1 9 20">Cell inner membrane</location>
        <topology evidence="1 9 20">Single-pass membrane protein</topology>
        <orientation evidence="9 20">Periplasmic side</orientation>
    </subcellularLocation>
    <text evidence="3 4 6 9 18 19 20 21">The bulk of the molecule, except for the N-terminal membrane anchor region, protrudes into the periplasmic space (PubMed:2677607, PubMed:9614966). Localizes to the division septum during the later stages of cell growth and throughout septation (PubMed:15601716, PubMed:9379897, PubMed:9603865, PubMed:9882665). Localization is dependent on FtsZ, FtsA, FtsK, FtsQ, FtsL and FtsW, but not on FtsN (PubMed:11703663, PubMed:11807049, PubMed:9603865, PubMed:9882665).</text>
</comment>
<comment type="domain">
    <text evidence="5 6 8 20">Contains an N-terminal membrane anchor-containing module, a central non-catalytic domain and a C-terminal penicillin-binding (PB) catalytic domain. The transmembrane region is essential for localization to the septal ring, interaction with FtsW and cell septation.</text>
</comment>
<comment type="similarity">
    <text evidence="1 25">Belongs to the transpeptidase family. FtsI subfamily.</text>
</comment>
<comment type="caution">
    <text evidence="26">Was originally thought to be a bifunctional enzyme with transglycosylase and transpeptidase activities.</text>
</comment>
<sequence length="588" mass="63877">MKAAAKTQKPKRQEEHANFISWRFALLCGCILLALAFLLGRVAWLQVISPDMLVKEGDMRSLRVQQVSTSRGMITDRSGRPLAVSVPVKAIWADPKEVHDAGGISVGDRWKALANALNIPLDQLSARINANPKGRFIYLARQVNPDMADYIKKLKLPGIHLREESRRYYPSGEVTAHLIGFTNVDSQGIEGVEKSFDKWLTGQPGERIVRKDRYGRVIEDISSTDSQAAHNLALSIDERLQALVYRELNNAVAFNKAESGSAVLVDVNTGEVLAMANSPSYNPNNLSGTPKEAMRNRTITDVFEPGSTVKPMVVMTALQRGVVRENSVLNTIPYRINGHEIKDVARYSELTLTGVLQKSSNVGVSKLALAMPSSALVDTYSRFGLGKATNLGLVGERSGLYPQKQRWSDIERATFSFGYGLMVTPLQLARVYATIGSYGIYRPLSITKVDPPVPGERVFPESIVRTVVHMMESVALPGGGGVKAAIKGYRIAIKTGTAKKVGPDGRYINKYIAYTAGVAPASQPRFALVVVINDPQAGKYYGGAVSAPVFGAIMGGVLRTMNIEPDALTTGDKNEFVINQGEGTGGRS</sequence>
<proteinExistence type="evidence at protein level"/>
<name>FTSI_ECOLI</name>
<keyword id="KW-0002">3D-structure</keyword>
<keyword id="KW-0121">Carboxypeptidase</keyword>
<keyword id="KW-0131">Cell cycle</keyword>
<keyword id="KW-0132">Cell division</keyword>
<keyword id="KW-0997">Cell inner membrane</keyword>
<keyword id="KW-1003">Cell membrane</keyword>
<keyword id="KW-0133">Cell shape</keyword>
<keyword id="KW-0961">Cell wall biogenesis/degradation</keyword>
<keyword id="KW-0378">Hydrolase</keyword>
<keyword id="KW-0472">Membrane</keyword>
<keyword id="KW-0573">Peptidoglycan synthesis</keyword>
<keyword id="KW-0645">Protease</keyword>
<keyword id="KW-1185">Reference proteome</keyword>
<keyword id="KW-0717">Septation</keyword>
<keyword id="KW-0812">Transmembrane</keyword>
<keyword id="KW-1133">Transmembrane helix</keyword>
<protein>
    <recommendedName>
        <fullName evidence="1 25">Peptidoglycan D,D-transpeptidase FtsI</fullName>
        <ecNumber evidence="1 12 15 16">3.4.16.4</ecNumber>
    </recommendedName>
    <alternativeName>
        <fullName evidence="25">Essential cell division protein FtsI</fullName>
    </alternativeName>
    <alternativeName>
        <fullName evidence="23">Murein transpeptidase</fullName>
    </alternativeName>
    <alternativeName>
        <fullName evidence="1 22 24">Penicillin-binding protein 3</fullName>
        <shortName evidence="1 24">PBP-3</shortName>
    </alternativeName>
    <alternativeName>
        <fullName evidence="25">Peptidoglycan synthase FtsI</fullName>
    </alternativeName>
</protein>